<name>APOE_CERSC</name>
<evidence type="ECO:0000250" key="1">
    <source>
        <dbReference type="UniProtKB" id="P02649"/>
    </source>
</evidence>
<evidence type="ECO:0000255" key="2"/>
<evidence type="ECO:0000305" key="3"/>
<gene>
    <name type="primary">APOE</name>
</gene>
<organism>
    <name type="scientific">Ceratotherium simum cottoni</name>
    <name type="common">Northern white rhinoceros</name>
    <dbReference type="NCBI Taxonomy" id="310713"/>
    <lineage>
        <taxon>Eukaryota</taxon>
        <taxon>Metazoa</taxon>
        <taxon>Chordata</taxon>
        <taxon>Craniata</taxon>
        <taxon>Vertebrata</taxon>
        <taxon>Euteleostomi</taxon>
        <taxon>Mammalia</taxon>
        <taxon>Eutheria</taxon>
        <taxon>Laurasiatheria</taxon>
        <taxon>Perissodactyla</taxon>
        <taxon>Rhinocerotidae</taxon>
        <taxon>Ceratotherium</taxon>
    </lineage>
</organism>
<comment type="function">
    <text evidence="1">APOE is an apolipoprotein, a protein associating with lipid particles, that mainly functions in lipoprotein-mediated lipid transport between organs via the plasma and interstitial fluids. APOE is a core component of plasma lipoproteins and is involved in their production, conversion and clearance. Apolipoproteins are amphipathic molecules that interact both with lipids of the lipoprotein particle core and the aqueous environment of the plasma. As such, APOE associates with chylomicrons, chylomicron remnants, very low density lipoproteins (VLDL) and intermediate density lipoproteins (IDL) but shows a preferential binding to high-density lipoproteins (HDL). It also binds a wide range of cellular receptors including the LDL receptor/LDLR and the very low-density lipoprotein receptor/VLDLR that mediate the cellular uptake of the APOE-containing lipoprotein particles. Finally, APOE also has a heparin-binding activity and binds heparan-sulfate proteoglycans on the surface of cells, a property that supports the capture and the receptor-mediated uptake of APOE-containing lipoproteins by cells.</text>
</comment>
<comment type="subunit">
    <text evidence="1">Homotetramer. May interact with ABCA1; functionally associated with ABCA1 in the biogenesis of HDLs. May interact with APP/A4 amyloid-beta peptide; the interaction is extremely stable in vitro but its physiological significance is unclear. May interact with MAPT. May interact with MAP2. In the cerebrospinal fluid, interacts with secreted SORL1. Interacts with PMEL; this allows the loading of PMEL luminal fragment on ILVs to induce fibril nucleation.</text>
</comment>
<comment type="subcellular location">
    <subcellularLocation>
        <location evidence="1">Secreted</location>
    </subcellularLocation>
    <subcellularLocation>
        <location evidence="1">Secreted</location>
        <location evidence="1">Extracellular space</location>
    </subcellularLocation>
    <subcellularLocation>
        <location evidence="1">Secreted</location>
        <location evidence="1">Extracellular space</location>
        <location evidence="1">Extracellular matrix</location>
    </subcellularLocation>
    <subcellularLocation>
        <location evidence="1">Extracellular vesicle</location>
    </subcellularLocation>
    <subcellularLocation>
        <location evidence="1">Endosome</location>
        <location evidence="1">Multivesicular body</location>
    </subcellularLocation>
    <text evidence="1">In the plasma, APOE is associated with chylomicrons, chylomicrons remnants, VLDL, LDL and HDL lipoproteins. Lipid poor oligomeric APOE is associated with the extracellular matrix in a calcium- and heparan-sulfate proteoglycans-dependent manner. Lipidation induces the release from the extracellular matrix. Colocalizes with CD63 and PMEL at exosomes and in intraluminal vesicles within multivesicular endosomes.</text>
</comment>
<comment type="PTM">
    <text evidence="1">APOE exists as multiple glycosylated and sialylated glycoforms within cells and in plasma. The extent of glycosylation and sialylation are tissue and context specific.</text>
</comment>
<comment type="PTM">
    <text evidence="1">Glycated in plasma VLDL.</text>
</comment>
<comment type="PTM">
    <text evidence="1">Phosphorylated by FAM20C in the extracellular medium.</text>
</comment>
<comment type="similarity">
    <text evidence="3">Belongs to the apolipoprotein A1/A4/E family.</text>
</comment>
<feature type="signal peptide" evidence="2">
    <location>
        <begin position="1"/>
        <end position="18"/>
    </location>
</feature>
<feature type="chain" id="PRO_0000452450" description="Apolipoprotein E">
    <location>
        <begin position="19"/>
        <end position="310"/>
    </location>
</feature>
<feature type="repeat" description="1">
    <location>
        <begin position="77"/>
        <end position="98"/>
    </location>
</feature>
<feature type="repeat" description="2">
    <location>
        <begin position="99"/>
        <end position="120"/>
    </location>
</feature>
<feature type="repeat" description="3">
    <location>
        <begin position="121"/>
        <end position="142"/>
    </location>
</feature>
<feature type="repeat" description="4">
    <location>
        <begin position="143"/>
        <end position="164"/>
    </location>
</feature>
<feature type="repeat" description="5">
    <location>
        <begin position="165"/>
        <end position="186"/>
    </location>
</feature>
<feature type="repeat" description="6">
    <location>
        <begin position="187"/>
        <end position="208"/>
    </location>
</feature>
<feature type="repeat" description="7">
    <location>
        <begin position="209"/>
        <end position="226"/>
    </location>
</feature>
<feature type="repeat" description="8">
    <location>
        <begin position="227"/>
        <end position="248"/>
    </location>
</feature>
<feature type="region of interest" description="8 X 22 AA approximate tandem repeats">
    <location>
        <begin position="77"/>
        <end position="248"/>
    </location>
</feature>
<feature type="region of interest" description="LDL and other lipoprotein receptors binding" evidence="1">
    <location>
        <begin position="155"/>
        <end position="165"/>
    </location>
</feature>
<feature type="region of interest" description="Lipid-binding and lipoprotein association" evidence="1">
    <location>
        <begin position="207"/>
        <end position="283"/>
    </location>
</feature>
<feature type="region of interest" description="Homooligomerization" evidence="1">
    <location>
        <begin position="259"/>
        <end position="310"/>
    </location>
</feature>
<feature type="region of interest" description="Specificity for association with VLDL" evidence="1">
    <location>
        <begin position="271"/>
        <end position="283"/>
    </location>
</feature>
<feature type="binding site" evidence="1">
    <location>
        <begin position="159"/>
        <end position="162"/>
    </location>
    <ligand>
        <name>heparin</name>
        <dbReference type="ChEBI" id="CHEBI:28304"/>
    </ligand>
</feature>
<feature type="binding site" evidence="1">
    <location>
        <begin position="222"/>
        <end position="229"/>
    </location>
    <ligand>
        <name>heparin</name>
        <dbReference type="ChEBI" id="CHEBI:28304"/>
    </ligand>
</feature>
<keyword id="KW-0162">Chylomicron</keyword>
<keyword id="KW-0967">Endosome</keyword>
<keyword id="KW-0272">Extracellular matrix</keyword>
<keyword id="KW-0325">Glycoprotein</keyword>
<keyword id="KW-0345">HDL</keyword>
<keyword id="KW-0358">Heparin-binding</keyword>
<keyword id="KW-0445">Lipid transport</keyword>
<keyword id="KW-0446">Lipid-binding</keyword>
<keyword id="KW-0558">Oxidation</keyword>
<keyword id="KW-0597">Phosphoprotein</keyword>
<keyword id="KW-0677">Repeat</keyword>
<keyword id="KW-0964">Secreted</keyword>
<keyword id="KW-0732">Signal</keyword>
<keyword id="KW-0813">Transport</keyword>
<keyword id="KW-0850">VLDL</keyword>
<accession>P0DUI5</accession>
<proteinExistence type="inferred from homology"/>
<sequence>MKVLWAALVVTLLAGCGADVEPGPEVQLGKEWATWQASQPWEQALGRFWNYLRWVQTLSEQVQEQLLSSQVTEELTALMDDTMKEVKACQSELEEQLGPVTEETKARVSKELQAAQARLGADMEEVRSRLAQYRGELQAMVGQSTEELRGRLSAHLRKMRKRLLRDAEDLQRRLAVYQAGIWEGAERSVNTLREHLGPLAEQAATVHTLVSKPLQERAEAWAQRLRGRLEKAGFPVGDRLDEVREQVQEVRAKVEEQANQVRLQAEAFQGRLKSWFEPLVQDMQQKWAELVEKVQLAVGAVPTSVPSEKQ</sequence>
<dbReference type="EMBL" id="PVLE01083148">
    <property type="status" value="NOT_ANNOTATED_CDS"/>
    <property type="molecule type" value="Genomic_DNA"/>
</dbReference>
<dbReference type="SMR" id="P0DUI5"/>
<dbReference type="GO" id="GO:0042627">
    <property type="term" value="C:chylomicron"/>
    <property type="evidence" value="ECO:0007669"/>
    <property type="project" value="UniProtKB-KW"/>
</dbReference>
<dbReference type="GO" id="GO:0070062">
    <property type="term" value="C:extracellular exosome"/>
    <property type="evidence" value="ECO:0000250"/>
    <property type="project" value="UniProtKB"/>
</dbReference>
<dbReference type="GO" id="GO:0034364">
    <property type="term" value="C:high-density lipoprotein particle"/>
    <property type="evidence" value="ECO:0007669"/>
    <property type="project" value="UniProtKB-KW"/>
</dbReference>
<dbReference type="GO" id="GO:0034362">
    <property type="term" value="C:low-density lipoprotein particle"/>
    <property type="evidence" value="ECO:0007669"/>
    <property type="project" value="TreeGrafter"/>
</dbReference>
<dbReference type="GO" id="GO:0097487">
    <property type="term" value="C:multivesicular body, internal vesicle"/>
    <property type="evidence" value="ECO:0000250"/>
    <property type="project" value="UniProtKB"/>
</dbReference>
<dbReference type="GO" id="GO:0034361">
    <property type="term" value="C:very-low-density lipoprotein particle"/>
    <property type="evidence" value="ECO:0007669"/>
    <property type="project" value="UniProtKB-KW"/>
</dbReference>
<dbReference type="GO" id="GO:0120020">
    <property type="term" value="F:cholesterol transfer activity"/>
    <property type="evidence" value="ECO:0007669"/>
    <property type="project" value="TreeGrafter"/>
</dbReference>
<dbReference type="GO" id="GO:0008201">
    <property type="term" value="F:heparin binding"/>
    <property type="evidence" value="ECO:0007669"/>
    <property type="project" value="UniProtKB-KW"/>
</dbReference>
<dbReference type="GO" id="GO:0060228">
    <property type="term" value="F:phosphatidylcholine-sterol O-acyltransferase activator activity"/>
    <property type="evidence" value="ECO:0007669"/>
    <property type="project" value="TreeGrafter"/>
</dbReference>
<dbReference type="GO" id="GO:0005543">
    <property type="term" value="F:phospholipid binding"/>
    <property type="evidence" value="ECO:0007669"/>
    <property type="project" value="TreeGrafter"/>
</dbReference>
<dbReference type="GO" id="GO:0055090">
    <property type="term" value="P:acylglycerol homeostasis"/>
    <property type="evidence" value="ECO:0007669"/>
    <property type="project" value="TreeGrafter"/>
</dbReference>
<dbReference type="GO" id="GO:0033344">
    <property type="term" value="P:cholesterol efflux"/>
    <property type="evidence" value="ECO:0007669"/>
    <property type="project" value="TreeGrafter"/>
</dbReference>
<dbReference type="GO" id="GO:0008203">
    <property type="term" value="P:cholesterol metabolic process"/>
    <property type="evidence" value="ECO:0007669"/>
    <property type="project" value="TreeGrafter"/>
</dbReference>
<dbReference type="GO" id="GO:0042157">
    <property type="term" value="P:lipoprotein metabolic process"/>
    <property type="evidence" value="ECO:0007669"/>
    <property type="project" value="InterPro"/>
</dbReference>
<dbReference type="GO" id="GO:0032438">
    <property type="term" value="P:melanosome organization"/>
    <property type="evidence" value="ECO:0000250"/>
    <property type="project" value="UniProtKB"/>
</dbReference>
<dbReference type="GO" id="GO:0033700">
    <property type="term" value="P:phospholipid efflux"/>
    <property type="evidence" value="ECO:0007669"/>
    <property type="project" value="TreeGrafter"/>
</dbReference>
<dbReference type="FunFam" id="1.20.120.20:FF:000002">
    <property type="entry name" value="Apolipoprotein E"/>
    <property type="match status" value="1"/>
</dbReference>
<dbReference type="FunFam" id="1.20.120.20:FF:000003">
    <property type="entry name" value="Apolipoprotein E"/>
    <property type="match status" value="1"/>
</dbReference>
<dbReference type="Gene3D" id="1.20.120.20">
    <property type="entry name" value="Apolipoprotein"/>
    <property type="match status" value="2"/>
</dbReference>
<dbReference type="InterPro" id="IPR000074">
    <property type="entry name" value="ApoA_E"/>
</dbReference>
<dbReference type="InterPro" id="IPR050163">
    <property type="entry name" value="Apolipoprotein_A1/A4/E"/>
</dbReference>
<dbReference type="PANTHER" id="PTHR18976">
    <property type="entry name" value="APOLIPOPROTEIN"/>
    <property type="match status" value="1"/>
</dbReference>
<dbReference type="PANTHER" id="PTHR18976:SF2">
    <property type="entry name" value="APOLIPOPROTEIN E"/>
    <property type="match status" value="1"/>
</dbReference>
<dbReference type="Pfam" id="PF01442">
    <property type="entry name" value="Apolipoprotein"/>
    <property type="match status" value="1"/>
</dbReference>
<dbReference type="SUPFAM" id="SSF58113">
    <property type="entry name" value="Apolipoprotein A-I"/>
    <property type="match status" value="1"/>
</dbReference>
<reference key="1">
    <citation type="submission" date="2018-02" db="EMBL/GenBank/DDBJ databases">
        <authorList>
            <person name="Johnson J."/>
            <person name="Muren E."/>
            <person name="Swofford R."/>
            <person name="Turner-Maier J."/>
            <person name="Marinescu V.D."/>
            <person name="Genereux D.P."/>
            <person name="Alfoldi J."/>
            <person name="Birren B."/>
            <person name="Karlsson E.K."/>
            <person name="Lindblad-Toh K."/>
        </authorList>
    </citation>
    <scope>NUCLEOTIDE SEQUENCE [LARGE SCALE GENOMIC DNA]</scope>
</reference>
<reference key="2">
    <citation type="unpublished observations" date="2021-01">
        <authorList>
            <person name="Puppione D.L."/>
        </authorList>
    </citation>
    <scope>IDENTIFICATION</scope>
</reference>
<protein>
    <recommendedName>
        <fullName>Apolipoprotein E</fullName>
        <shortName>Apo-E</shortName>
    </recommendedName>
</protein>